<sequence length="94" mass="10499">MNVYSVIKKPHVTEKASLGSDATNTVTIVVDRDANKIEIKQAVETLFKVKVDSVRTVNVAGKVKRFGRNFGKHSNWKKAFVTLSEGQSLDFFEV</sequence>
<feature type="chain" id="PRO_1000068129" description="Large ribosomal subunit protein uL23">
    <location>
        <begin position="1"/>
        <end position="94"/>
    </location>
</feature>
<comment type="function">
    <text evidence="1">One of the early assembly proteins it binds 23S rRNA. One of the proteins that surrounds the polypeptide exit tunnel on the outside of the ribosome. Forms the main docking site for trigger factor binding to the ribosome.</text>
</comment>
<comment type="subunit">
    <text evidence="1">Part of the 50S ribosomal subunit. Contacts protein L29, and trigger factor when it is bound to the ribosome.</text>
</comment>
<comment type="similarity">
    <text evidence="1">Belongs to the universal ribosomal protein uL23 family.</text>
</comment>
<organism>
    <name type="scientific">Pelobacter propionicus (strain DSM 2379 / NBRC 103807 / OttBd1)</name>
    <dbReference type="NCBI Taxonomy" id="338966"/>
    <lineage>
        <taxon>Bacteria</taxon>
        <taxon>Pseudomonadati</taxon>
        <taxon>Thermodesulfobacteriota</taxon>
        <taxon>Desulfuromonadia</taxon>
        <taxon>Desulfuromonadales</taxon>
        <taxon>Desulfuromonadaceae</taxon>
        <taxon>Pelobacter</taxon>
    </lineage>
</organism>
<proteinExistence type="inferred from homology"/>
<accession>A1ALU3</accession>
<evidence type="ECO:0000255" key="1">
    <source>
        <dbReference type="HAMAP-Rule" id="MF_01369"/>
    </source>
</evidence>
<evidence type="ECO:0000305" key="2"/>
<keyword id="KW-1185">Reference proteome</keyword>
<keyword id="KW-0687">Ribonucleoprotein</keyword>
<keyword id="KW-0689">Ribosomal protein</keyword>
<keyword id="KW-0694">RNA-binding</keyword>
<keyword id="KW-0699">rRNA-binding</keyword>
<dbReference type="EMBL" id="CP000482">
    <property type="protein sequence ID" value="ABK98313.1"/>
    <property type="molecule type" value="Genomic_DNA"/>
</dbReference>
<dbReference type="RefSeq" id="WP_011734625.1">
    <property type="nucleotide sequence ID" value="NC_008609.1"/>
</dbReference>
<dbReference type="SMR" id="A1ALU3"/>
<dbReference type="STRING" id="338966.Ppro_0682"/>
<dbReference type="KEGG" id="ppd:Ppro_0682"/>
<dbReference type="eggNOG" id="COG0089">
    <property type="taxonomic scope" value="Bacteria"/>
</dbReference>
<dbReference type="HOGENOM" id="CLU_037562_3_1_7"/>
<dbReference type="OrthoDB" id="9793353at2"/>
<dbReference type="Proteomes" id="UP000006732">
    <property type="component" value="Chromosome"/>
</dbReference>
<dbReference type="GO" id="GO:1990904">
    <property type="term" value="C:ribonucleoprotein complex"/>
    <property type="evidence" value="ECO:0007669"/>
    <property type="project" value="UniProtKB-KW"/>
</dbReference>
<dbReference type="GO" id="GO:0005840">
    <property type="term" value="C:ribosome"/>
    <property type="evidence" value="ECO:0007669"/>
    <property type="project" value="UniProtKB-KW"/>
</dbReference>
<dbReference type="GO" id="GO:0019843">
    <property type="term" value="F:rRNA binding"/>
    <property type="evidence" value="ECO:0007669"/>
    <property type="project" value="UniProtKB-UniRule"/>
</dbReference>
<dbReference type="GO" id="GO:0003735">
    <property type="term" value="F:structural constituent of ribosome"/>
    <property type="evidence" value="ECO:0007669"/>
    <property type="project" value="InterPro"/>
</dbReference>
<dbReference type="GO" id="GO:0006412">
    <property type="term" value="P:translation"/>
    <property type="evidence" value="ECO:0007669"/>
    <property type="project" value="UniProtKB-UniRule"/>
</dbReference>
<dbReference type="FunFam" id="3.30.70.330:FF:000001">
    <property type="entry name" value="50S ribosomal protein L23"/>
    <property type="match status" value="1"/>
</dbReference>
<dbReference type="Gene3D" id="3.30.70.330">
    <property type="match status" value="1"/>
</dbReference>
<dbReference type="HAMAP" id="MF_01369_B">
    <property type="entry name" value="Ribosomal_uL23_B"/>
    <property type="match status" value="1"/>
</dbReference>
<dbReference type="InterPro" id="IPR012677">
    <property type="entry name" value="Nucleotide-bd_a/b_plait_sf"/>
</dbReference>
<dbReference type="InterPro" id="IPR013025">
    <property type="entry name" value="Ribosomal_uL23-like"/>
</dbReference>
<dbReference type="InterPro" id="IPR012678">
    <property type="entry name" value="Ribosomal_uL23/eL15/eS24_sf"/>
</dbReference>
<dbReference type="InterPro" id="IPR001014">
    <property type="entry name" value="Ribosomal_uL23_CS"/>
</dbReference>
<dbReference type="NCBIfam" id="NF004359">
    <property type="entry name" value="PRK05738.1-3"/>
    <property type="match status" value="1"/>
</dbReference>
<dbReference type="NCBIfam" id="NF004363">
    <property type="entry name" value="PRK05738.2-4"/>
    <property type="match status" value="1"/>
</dbReference>
<dbReference type="NCBIfam" id="NF004366">
    <property type="entry name" value="PRK05738.3-2"/>
    <property type="match status" value="1"/>
</dbReference>
<dbReference type="PANTHER" id="PTHR11620">
    <property type="entry name" value="60S RIBOSOMAL PROTEIN L23A"/>
    <property type="match status" value="1"/>
</dbReference>
<dbReference type="Pfam" id="PF00276">
    <property type="entry name" value="Ribosomal_L23"/>
    <property type="match status" value="1"/>
</dbReference>
<dbReference type="SUPFAM" id="SSF54189">
    <property type="entry name" value="Ribosomal proteins S24e, L23 and L15e"/>
    <property type="match status" value="1"/>
</dbReference>
<dbReference type="PROSITE" id="PS00050">
    <property type="entry name" value="RIBOSOMAL_L23"/>
    <property type="match status" value="1"/>
</dbReference>
<reference key="1">
    <citation type="submission" date="2006-10" db="EMBL/GenBank/DDBJ databases">
        <title>Complete sequence of chromosome of Pelobacter propionicus DSM 2379.</title>
        <authorList>
            <consortium name="US DOE Joint Genome Institute"/>
            <person name="Copeland A."/>
            <person name="Lucas S."/>
            <person name="Lapidus A."/>
            <person name="Barry K."/>
            <person name="Detter J.C."/>
            <person name="Glavina del Rio T."/>
            <person name="Hammon N."/>
            <person name="Israni S."/>
            <person name="Dalin E."/>
            <person name="Tice H."/>
            <person name="Pitluck S."/>
            <person name="Saunders E."/>
            <person name="Brettin T."/>
            <person name="Bruce D."/>
            <person name="Han C."/>
            <person name="Tapia R."/>
            <person name="Schmutz J."/>
            <person name="Larimer F."/>
            <person name="Land M."/>
            <person name="Hauser L."/>
            <person name="Kyrpides N."/>
            <person name="Kim E."/>
            <person name="Lovley D."/>
            <person name="Richardson P."/>
        </authorList>
    </citation>
    <scope>NUCLEOTIDE SEQUENCE [LARGE SCALE GENOMIC DNA]</scope>
    <source>
        <strain>DSM 2379 / NBRC 103807 / OttBd1</strain>
    </source>
</reference>
<name>RL23_PELPD</name>
<gene>
    <name evidence="1" type="primary">rplW</name>
    <name type="ordered locus">Ppro_0682</name>
</gene>
<protein>
    <recommendedName>
        <fullName evidence="1">Large ribosomal subunit protein uL23</fullName>
    </recommendedName>
    <alternativeName>
        <fullName evidence="2">50S ribosomal protein L23</fullName>
    </alternativeName>
</protein>